<evidence type="ECO:0000255" key="1">
    <source>
        <dbReference type="HAMAP-Rule" id="MF_00520"/>
    </source>
</evidence>
<name>ARAB_SALA4</name>
<accession>B5F784</accession>
<proteinExistence type="inferred from homology"/>
<gene>
    <name evidence="1" type="primary">araB</name>
    <name type="ordered locus">SeAg_B0114</name>
</gene>
<feature type="chain" id="PRO_1000127636" description="Ribulokinase">
    <location>
        <begin position="1"/>
        <end position="569"/>
    </location>
</feature>
<organism>
    <name type="scientific">Salmonella agona (strain SL483)</name>
    <dbReference type="NCBI Taxonomy" id="454166"/>
    <lineage>
        <taxon>Bacteria</taxon>
        <taxon>Pseudomonadati</taxon>
        <taxon>Pseudomonadota</taxon>
        <taxon>Gammaproteobacteria</taxon>
        <taxon>Enterobacterales</taxon>
        <taxon>Enterobacteriaceae</taxon>
        <taxon>Salmonella</taxon>
    </lineage>
</organism>
<protein>
    <recommendedName>
        <fullName evidence="1">Ribulokinase</fullName>
        <ecNumber evidence="1">2.7.1.16</ecNumber>
    </recommendedName>
</protein>
<reference key="1">
    <citation type="journal article" date="2011" name="J. Bacteriol.">
        <title>Comparative genomics of 28 Salmonella enterica isolates: evidence for CRISPR-mediated adaptive sublineage evolution.</title>
        <authorList>
            <person name="Fricke W.F."/>
            <person name="Mammel M.K."/>
            <person name="McDermott P.F."/>
            <person name="Tartera C."/>
            <person name="White D.G."/>
            <person name="Leclerc J.E."/>
            <person name="Ravel J."/>
            <person name="Cebula T.A."/>
        </authorList>
    </citation>
    <scope>NUCLEOTIDE SEQUENCE [LARGE SCALE GENOMIC DNA]</scope>
    <source>
        <strain>SL483</strain>
    </source>
</reference>
<comment type="catalytic activity">
    <reaction evidence="1">
        <text>D-ribulose + ATP = D-ribulose 5-phosphate + ADP + H(+)</text>
        <dbReference type="Rhea" id="RHEA:17601"/>
        <dbReference type="ChEBI" id="CHEBI:15378"/>
        <dbReference type="ChEBI" id="CHEBI:17173"/>
        <dbReference type="ChEBI" id="CHEBI:30616"/>
        <dbReference type="ChEBI" id="CHEBI:58121"/>
        <dbReference type="ChEBI" id="CHEBI:456216"/>
        <dbReference type="EC" id="2.7.1.16"/>
    </reaction>
</comment>
<comment type="catalytic activity">
    <reaction evidence="1">
        <text>L-ribulose + ATP = L-ribulose 5-phosphate + ADP + H(+)</text>
        <dbReference type="Rhea" id="RHEA:22072"/>
        <dbReference type="ChEBI" id="CHEBI:15378"/>
        <dbReference type="ChEBI" id="CHEBI:16880"/>
        <dbReference type="ChEBI" id="CHEBI:30616"/>
        <dbReference type="ChEBI" id="CHEBI:58226"/>
        <dbReference type="ChEBI" id="CHEBI:456216"/>
        <dbReference type="EC" id="2.7.1.16"/>
    </reaction>
</comment>
<comment type="pathway">
    <text evidence="1">Carbohydrate degradation; L-arabinose degradation via L-ribulose; D-xylulose 5-phosphate from L-arabinose (bacterial route): step 2/3.</text>
</comment>
<comment type="similarity">
    <text evidence="1">Belongs to the ribulokinase family.</text>
</comment>
<keyword id="KW-0054">Arabinose catabolism</keyword>
<keyword id="KW-0067">ATP-binding</keyword>
<keyword id="KW-0119">Carbohydrate metabolism</keyword>
<keyword id="KW-0418">Kinase</keyword>
<keyword id="KW-0547">Nucleotide-binding</keyword>
<keyword id="KW-0808">Transferase</keyword>
<sequence>MAIAIGLDFGSDSVRALAVDCATGDEIATSVEWYPRWQEGRYCDGPNNQFRHHPRDYMESMEAALKAVLAQLSSAQRANVVGIGVDSTGSTPAPIDADGNVLALRPEFAENPNAMFVLWKDHTAVEEADEITRLCHKPGKVDYSRYIGGIYSSEWFWAKILHVTRQDSAVAQAAVSWIELCDWVPALLSGTTRPQDIRRGRCSAGHKTLWHESWGGLPPSSFFDELDPCINRHLRYPLFSETFTADLPVGTLCAEWAQRLGLPESVVISGGAFDCHMGAVGAGAQPNTLVKVIGTSTCDILIADKQSVGDRAVKGICGQVDGSVVPNFIGLEAGQSAFGDIYAWFSRVLSWPLEQLAAQHPELKTQINASQKQLLPALTDAWAKNPSLDHLPVVLDWFNGRRTPNANQRLKGVITDLNLATDAPALFGGLVASTAFGARAIQECFTDQGIAVNNVMALGGIARKNQVIMQVCCDVLNRPLQIVASDQCCALGAAIFAAVAAKIHADIPAAQQSMASAVERTLRPRPEQAQRLEQLYRRYQQWALSAEQHYLPTAAPAPTTPANQAILTH</sequence>
<dbReference type="EC" id="2.7.1.16" evidence="1"/>
<dbReference type="EMBL" id="CP001138">
    <property type="protein sequence ID" value="ACH49543.1"/>
    <property type="molecule type" value="Genomic_DNA"/>
</dbReference>
<dbReference type="RefSeq" id="WP_000951827.1">
    <property type="nucleotide sequence ID" value="NC_011149.1"/>
</dbReference>
<dbReference type="SMR" id="B5F784"/>
<dbReference type="KEGG" id="sea:SeAg_B0114"/>
<dbReference type="HOGENOM" id="CLU_009281_9_1_6"/>
<dbReference type="UniPathway" id="UPA00145">
    <property type="reaction ID" value="UER00566"/>
</dbReference>
<dbReference type="Proteomes" id="UP000008819">
    <property type="component" value="Chromosome"/>
</dbReference>
<dbReference type="GO" id="GO:0005737">
    <property type="term" value="C:cytoplasm"/>
    <property type="evidence" value="ECO:0007669"/>
    <property type="project" value="TreeGrafter"/>
</dbReference>
<dbReference type="GO" id="GO:0005524">
    <property type="term" value="F:ATP binding"/>
    <property type="evidence" value="ECO:0007669"/>
    <property type="project" value="UniProtKB-KW"/>
</dbReference>
<dbReference type="GO" id="GO:0019150">
    <property type="term" value="F:D-ribulokinase activity"/>
    <property type="evidence" value="ECO:0007669"/>
    <property type="project" value="TreeGrafter"/>
</dbReference>
<dbReference type="GO" id="GO:0008741">
    <property type="term" value="F:ribulokinase activity"/>
    <property type="evidence" value="ECO:0007669"/>
    <property type="project" value="UniProtKB-UniRule"/>
</dbReference>
<dbReference type="GO" id="GO:0019569">
    <property type="term" value="P:L-arabinose catabolic process to xylulose 5-phosphate"/>
    <property type="evidence" value="ECO:0007669"/>
    <property type="project" value="UniProtKB-UniRule"/>
</dbReference>
<dbReference type="CDD" id="cd07781">
    <property type="entry name" value="ASKHA_NBD_FGGY_L-RBK"/>
    <property type="match status" value="1"/>
</dbReference>
<dbReference type="Gene3D" id="1.20.58.2240">
    <property type="match status" value="1"/>
</dbReference>
<dbReference type="Gene3D" id="3.30.420.40">
    <property type="match status" value="1"/>
</dbReference>
<dbReference type="HAMAP" id="MF_00520">
    <property type="entry name" value="Ribulokinase"/>
    <property type="match status" value="1"/>
</dbReference>
<dbReference type="InterPro" id="IPR043129">
    <property type="entry name" value="ATPase_NBD"/>
</dbReference>
<dbReference type="InterPro" id="IPR018485">
    <property type="entry name" value="FGGY_C"/>
</dbReference>
<dbReference type="InterPro" id="IPR005929">
    <property type="entry name" value="Ribulokinase"/>
</dbReference>
<dbReference type="NCBIfam" id="TIGR01234">
    <property type="entry name" value="L-ribulokinase"/>
    <property type="match status" value="1"/>
</dbReference>
<dbReference type="NCBIfam" id="NF003154">
    <property type="entry name" value="PRK04123.1"/>
    <property type="match status" value="1"/>
</dbReference>
<dbReference type="PANTHER" id="PTHR43435:SF4">
    <property type="entry name" value="FGGY CARBOHYDRATE KINASE DOMAIN-CONTAINING PROTEIN"/>
    <property type="match status" value="1"/>
</dbReference>
<dbReference type="PANTHER" id="PTHR43435">
    <property type="entry name" value="RIBULOKINASE"/>
    <property type="match status" value="1"/>
</dbReference>
<dbReference type="Pfam" id="PF02782">
    <property type="entry name" value="FGGY_C"/>
    <property type="match status" value="1"/>
</dbReference>
<dbReference type="SUPFAM" id="SSF53067">
    <property type="entry name" value="Actin-like ATPase domain"/>
    <property type="match status" value="2"/>
</dbReference>